<accession>A1WV00</accession>
<evidence type="ECO:0000255" key="1">
    <source>
        <dbReference type="HAMAP-Rule" id="MF_00219"/>
    </source>
</evidence>
<feature type="chain" id="PRO_0000325571" description="Dihydroorotase">
    <location>
        <begin position="1"/>
        <end position="345"/>
    </location>
</feature>
<feature type="active site" evidence="1">
    <location>
        <position position="247"/>
    </location>
</feature>
<feature type="binding site" evidence="1">
    <location>
        <position position="13"/>
    </location>
    <ligand>
        <name>Zn(2+)</name>
        <dbReference type="ChEBI" id="CHEBI:29105"/>
        <label>1</label>
    </ligand>
</feature>
<feature type="binding site" evidence="1">
    <location>
        <begin position="15"/>
        <end position="17"/>
    </location>
    <ligand>
        <name>substrate</name>
    </ligand>
</feature>
<feature type="binding site" evidence="1">
    <location>
        <position position="15"/>
    </location>
    <ligand>
        <name>Zn(2+)</name>
        <dbReference type="ChEBI" id="CHEBI:29105"/>
        <label>1</label>
    </ligand>
</feature>
<feature type="binding site" evidence="1">
    <location>
        <position position="41"/>
    </location>
    <ligand>
        <name>substrate</name>
    </ligand>
</feature>
<feature type="binding site" description="via carbamate group" evidence="1">
    <location>
        <position position="99"/>
    </location>
    <ligand>
        <name>Zn(2+)</name>
        <dbReference type="ChEBI" id="CHEBI:29105"/>
        <label>1</label>
    </ligand>
</feature>
<feature type="binding site" description="via carbamate group" evidence="1">
    <location>
        <position position="99"/>
    </location>
    <ligand>
        <name>Zn(2+)</name>
        <dbReference type="ChEBI" id="CHEBI:29105"/>
        <label>2</label>
    </ligand>
</feature>
<feature type="binding site" evidence="1">
    <location>
        <position position="136"/>
    </location>
    <ligand>
        <name>substrate</name>
    </ligand>
</feature>
<feature type="binding site" evidence="1">
    <location>
        <position position="136"/>
    </location>
    <ligand>
        <name>Zn(2+)</name>
        <dbReference type="ChEBI" id="CHEBI:29105"/>
        <label>2</label>
    </ligand>
</feature>
<feature type="binding site" evidence="1">
    <location>
        <position position="174"/>
    </location>
    <ligand>
        <name>Zn(2+)</name>
        <dbReference type="ChEBI" id="CHEBI:29105"/>
        <label>2</label>
    </ligand>
</feature>
<feature type="binding site" evidence="1">
    <location>
        <position position="247"/>
    </location>
    <ligand>
        <name>Zn(2+)</name>
        <dbReference type="ChEBI" id="CHEBI:29105"/>
        <label>1</label>
    </ligand>
</feature>
<feature type="binding site" evidence="1">
    <location>
        <position position="251"/>
    </location>
    <ligand>
        <name>substrate</name>
    </ligand>
</feature>
<feature type="binding site" evidence="1">
    <location>
        <position position="263"/>
    </location>
    <ligand>
        <name>substrate</name>
    </ligand>
</feature>
<feature type="modified residue" description="N6-carboxylysine" evidence="1">
    <location>
        <position position="99"/>
    </location>
</feature>
<organism>
    <name type="scientific">Halorhodospira halophila (strain DSM 244 / SL1)</name>
    <name type="common">Ectothiorhodospira halophila (strain DSM 244 / SL1)</name>
    <dbReference type="NCBI Taxonomy" id="349124"/>
    <lineage>
        <taxon>Bacteria</taxon>
        <taxon>Pseudomonadati</taxon>
        <taxon>Pseudomonadota</taxon>
        <taxon>Gammaproteobacteria</taxon>
        <taxon>Chromatiales</taxon>
        <taxon>Ectothiorhodospiraceae</taxon>
        <taxon>Halorhodospira</taxon>
    </lineage>
</organism>
<sequence>MDTLTLPRPDDWHLHLRDGALMQAVAPQAAAVFSRAIIMPNLQPPVTTVEQAAAYRQRILGALPAGSTFEPLMTLYLTDKTSPEEIVRAAASGFVHAVKLYPAGATTHSDAGVTDLLLCYDALAAMEEQGLPLLIHGERTGPELDIFERETAFIDDVLQPLLDRHPRLKVVLEHVTTAVGAELVTGDDPRLAGTFTPQHLLYNRNDLLVGGLKPHYYCMPILKREADREALLEAATSGHPRVFLGTDSAPHPRGAKESACGCAGCYTAPIALSLYAEAFEAAGALERLADFAGRNGPAFYGLPVNPETVTLERAPLEVPASYPGGDEPVVPLRAGESLAWRLHQP</sequence>
<comment type="function">
    <text evidence="1">Catalyzes the reversible cyclization of carbamoyl aspartate to dihydroorotate.</text>
</comment>
<comment type="catalytic activity">
    <reaction evidence="1">
        <text>(S)-dihydroorotate + H2O = N-carbamoyl-L-aspartate + H(+)</text>
        <dbReference type="Rhea" id="RHEA:24296"/>
        <dbReference type="ChEBI" id="CHEBI:15377"/>
        <dbReference type="ChEBI" id="CHEBI:15378"/>
        <dbReference type="ChEBI" id="CHEBI:30864"/>
        <dbReference type="ChEBI" id="CHEBI:32814"/>
        <dbReference type="EC" id="3.5.2.3"/>
    </reaction>
</comment>
<comment type="cofactor">
    <cofactor evidence="1">
        <name>Zn(2+)</name>
        <dbReference type="ChEBI" id="CHEBI:29105"/>
    </cofactor>
    <text evidence="1">Binds 2 Zn(2+) ions per subunit.</text>
</comment>
<comment type="pathway">
    <text evidence="1">Pyrimidine metabolism; UMP biosynthesis via de novo pathway; (S)-dihydroorotate from bicarbonate: step 3/3.</text>
</comment>
<comment type="subunit">
    <text evidence="1">Homodimer.</text>
</comment>
<comment type="similarity">
    <text evidence="1">Belongs to the metallo-dependent hydrolases superfamily. DHOase family. Class II DHOase subfamily.</text>
</comment>
<proteinExistence type="inferred from homology"/>
<dbReference type="EC" id="3.5.2.3" evidence="1"/>
<dbReference type="EMBL" id="CP000544">
    <property type="protein sequence ID" value="ABM61512.1"/>
    <property type="molecule type" value="Genomic_DNA"/>
</dbReference>
<dbReference type="RefSeq" id="WP_011813535.1">
    <property type="nucleotide sequence ID" value="NC_008789.1"/>
</dbReference>
<dbReference type="SMR" id="A1WV00"/>
<dbReference type="STRING" id="349124.Hhal_0730"/>
<dbReference type="MEROPS" id="M38.A02"/>
<dbReference type="KEGG" id="hha:Hhal_0730"/>
<dbReference type="eggNOG" id="COG0418">
    <property type="taxonomic scope" value="Bacteria"/>
</dbReference>
<dbReference type="HOGENOM" id="CLU_041558_1_0_6"/>
<dbReference type="OrthoDB" id="9808095at2"/>
<dbReference type="UniPathway" id="UPA00070">
    <property type="reaction ID" value="UER00117"/>
</dbReference>
<dbReference type="Proteomes" id="UP000000647">
    <property type="component" value="Chromosome"/>
</dbReference>
<dbReference type="GO" id="GO:0005829">
    <property type="term" value="C:cytosol"/>
    <property type="evidence" value="ECO:0007669"/>
    <property type="project" value="TreeGrafter"/>
</dbReference>
<dbReference type="GO" id="GO:0004151">
    <property type="term" value="F:dihydroorotase activity"/>
    <property type="evidence" value="ECO:0007669"/>
    <property type="project" value="UniProtKB-UniRule"/>
</dbReference>
<dbReference type="GO" id="GO:0008270">
    <property type="term" value="F:zinc ion binding"/>
    <property type="evidence" value="ECO:0007669"/>
    <property type="project" value="UniProtKB-UniRule"/>
</dbReference>
<dbReference type="GO" id="GO:0006207">
    <property type="term" value="P:'de novo' pyrimidine nucleobase biosynthetic process"/>
    <property type="evidence" value="ECO:0007669"/>
    <property type="project" value="TreeGrafter"/>
</dbReference>
<dbReference type="GO" id="GO:0044205">
    <property type="term" value="P:'de novo' UMP biosynthetic process"/>
    <property type="evidence" value="ECO:0007669"/>
    <property type="project" value="UniProtKB-UniRule"/>
</dbReference>
<dbReference type="CDD" id="cd01294">
    <property type="entry name" value="DHOase"/>
    <property type="match status" value="1"/>
</dbReference>
<dbReference type="Gene3D" id="3.20.20.140">
    <property type="entry name" value="Metal-dependent hydrolases"/>
    <property type="match status" value="1"/>
</dbReference>
<dbReference type="HAMAP" id="MF_00219">
    <property type="entry name" value="PyrC_classII"/>
    <property type="match status" value="1"/>
</dbReference>
<dbReference type="InterPro" id="IPR006680">
    <property type="entry name" value="Amidohydro-rel"/>
</dbReference>
<dbReference type="InterPro" id="IPR004721">
    <property type="entry name" value="DHOdimr"/>
</dbReference>
<dbReference type="InterPro" id="IPR002195">
    <property type="entry name" value="Dihydroorotase_CS"/>
</dbReference>
<dbReference type="InterPro" id="IPR032466">
    <property type="entry name" value="Metal_Hydrolase"/>
</dbReference>
<dbReference type="NCBIfam" id="TIGR00856">
    <property type="entry name" value="pyrC_dimer"/>
    <property type="match status" value="1"/>
</dbReference>
<dbReference type="PANTHER" id="PTHR43137">
    <property type="entry name" value="DIHYDROOROTASE"/>
    <property type="match status" value="1"/>
</dbReference>
<dbReference type="PANTHER" id="PTHR43137:SF1">
    <property type="entry name" value="DIHYDROOROTASE"/>
    <property type="match status" value="1"/>
</dbReference>
<dbReference type="Pfam" id="PF01979">
    <property type="entry name" value="Amidohydro_1"/>
    <property type="match status" value="1"/>
</dbReference>
<dbReference type="PIRSF" id="PIRSF001237">
    <property type="entry name" value="DHOdimr"/>
    <property type="match status" value="1"/>
</dbReference>
<dbReference type="SUPFAM" id="SSF51556">
    <property type="entry name" value="Metallo-dependent hydrolases"/>
    <property type="match status" value="1"/>
</dbReference>
<dbReference type="PROSITE" id="PS00482">
    <property type="entry name" value="DIHYDROOROTASE_1"/>
    <property type="match status" value="1"/>
</dbReference>
<dbReference type="PROSITE" id="PS00483">
    <property type="entry name" value="DIHYDROOROTASE_2"/>
    <property type="match status" value="1"/>
</dbReference>
<reference key="1">
    <citation type="submission" date="2006-12" db="EMBL/GenBank/DDBJ databases">
        <title>Complete sequence of Halorhodospira halophila SL1.</title>
        <authorList>
            <consortium name="US DOE Joint Genome Institute"/>
            <person name="Copeland A."/>
            <person name="Lucas S."/>
            <person name="Lapidus A."/>
            <person name="Barry K."/>
            <person name="Detter J.C."/>
            <person name="Glavina del Rio T."/>
            <person name="Hammon N."/>
            <person name="Israni S."/>
            <person name="Dalin E."/>
            <person name="Tice H."/>
            <person name="Pitluck S."/>
            <person name="Saunders E."/>
            <person name="Brettin T."/>
            <person name="Bruce D."/>
            <person name="Han C."/>
            <person name="Tapia R."/>
            <person name="Schmutz J."/>
            <person name="Larimer F."/>
            <person name="Land M."/>
            <person name="Hauser L."/>
            <person name="Kyrpides N."/>
            <person name="Mikhailova N."/>
            <person name="Hoff W."/>
            <person name="Richardson P."/>
        </authorList>
    </citation>
    <scope>NUCLEOTIDE SEQUENCE [LARGE SCALE GENOMIC DNA]</scope>
    <source>
        <strain>DSM 244 / SL1</strain>
    </source>
</reference>
<name>PYRC_HALHL</name>
<protein>
    <recommendedName>
        <fullName evidence="1">Dihydroorotase</fullName>
        <shortName evidence="1">DHOase</shortName>
        <ecNumber evidence="1">3.5.2.3</ecNumber>
    </recommendedName>
</protein>
<keyword id="KW-0378">Hydrolase</keyword>
<keyword id="KW-0479">Metal-binding</keyword>
<keyword id="KW-0665">Pyrimidine biosynthesis</keyword>
<keyword id="KW-1185">Reference proteome</keyword>
<keyword id="KW-0862">Zinc</keyword>
<gene>
    <name evidence="1" type="primary">pyrC</name>
    <name type="ordered locus">Hhal_0730</name>
</gene>